<accession>B0TX95</accession>
<reference key="1">
    <citation type="submission" date="2007-12" db="EMBL/GenBank/DDBJ databases">
        <title>Complete sequence of chromosome of Francisella philomiragia subsp. philomiragia ATCC 25017.</title>
        <authorList>
            <consortium name="US DOE Joint Genome Institute"/>
            <person name="Copeland A."/>
            <person name="Lucas S."/>
            <person name="Lapidus A."/>
            <person name="Barry K."/>
            <person name="Detter J.C."/>
            <person name="Glavina del Rio T."/>
            <person name="Hammon N."/>
            <person name="Israni S."/>
            <person name="Dalin E."/>
            <person name="Tice H."/>
            <person name="Pitluck S."/>
            <person name="Chain P."/>
            <person name="Malfatti S."/>
            <person name="Shin M."/>
            <person name="Vergez L."/>
            <person name="Schmutz J."/>
            <person name="Larimer F."/>
            <person name="Land M."/>
            <person name="Hauser L."/>
            <person name="Richardson P."/>
        </authorList>
    </citation>
    <scope>NUCLEOTIDE SEQUENCE [LARGE SCALE GENOMIC DNA]</scope>
    <source>
        <strain>ATCC 25017 / CCUG 19701 / FSC 153 / O#319-036</strain>
    </source>
</reference>
<proteinExistence type="inferred from homology"/>
<protein>
    <recommendedName>
        <fullName evidence="1">Ribosomal RNA small subunit methyltransferase J</fullName>
        <ecNumber evidence="1">2.1.1.242</ecNumber>
    </recommendedName>
    <alternativeName>
        <fullName evidence="1">16S rRNA m2G1516 methyltransferase</fullName>
    </alternativeName>
    <alternativeName>
        <fullName evidence="1">rRNA (guanine-N(2)-)-methyltransferase</fullName>
    </alternativeName>
</protein>
<dbReference type="EC" id="2.1.1.242" evidence="1"/>
<dbReference type="EMBL" id="CP000937">
    <property type="protein sequence ID" value="ABZ87353.1"/>
    <property type="molecule type" value="Genomic_DNA"/>
</dbReference>
<dbReference type="SMR" id="B0TX95"/>
<dbReference type="KEGG" id="fph:Fphi_1129"/>
<dbReference type="eggNOG" id="COG0742">
    <property type="taxonomic scope" value="Bacteria"/>
</dbReference>
<dbReference type="HOGENOM" id="CLU_076324_1_0_6"/>
<dbReference type="GO" id="GO:0005737">
    <property type="term" value="C:cytoplasm"/>
    <property type="evidence" value="ECO:0007669"/>
    <property type="project" value="UniProtKB-SubCell"/>
</dbReference>
<dbReference type="GO" id="GO:0008990">
    <property type="term" value="F:rRNA (guanine-N2-)-methyltransferase activity"/>
    <property type="evidence" value="ECO:0007669"/>
    <property type="project" value="UniProtKB-UniRule"/>
</dbReference>
<dbReference type="CDD" id="cd02440">
    <property type="entry name" value="AdoMet_MTases"/>
    <property type="match status" value="1"/>
</dbReference>
<dbReference type="Gene3D" id="3.40.50.150">
    <property type="entry name" value="Vaccinia Virus protein VP39"/>
    <property type="match status" value="1"/>
</dbReference>
<dbReference type="HAMAP" id="MF_01523">
    <property type="entry name" value="16SrRNA_methyltr_J"/>
    <property type="match status" value="1"/>
</dbReference>
<dbReference type="InterPro" id="IPR007536">
    <property type="entry name" value="16SrRNA_methylTrfase_J"/>
</dbReference>
<dbReference type="InterPro" id="IPR029063">
    <property type="entry name" value="SAM-dependent_MTases_sf"/>
</dbReference>
<dbReference type="PANTHER" id="PTHR36112">
    <property type="entry name" value="RIBOSOMAL RNA SMALL SUBUNIT METHYLTRANSFERASE J"/>
    <property type="match status" value="1"/>
</dbReference>
<dbReference type="PANTHER" id="PTHR36112:SF1">
    <property type="entry name" value="RIBOSOMAL RNA SMALL SUBUNIT METHYLTRANSFERASE J"/>
    <property type="match status" value="1"/>
</dbReference>
<dbReference type="Pfam" id="PF04445">
    <property type="entry name" value="SAM_MT"/>
    <property type="match status" value="1"/>
</dbReference>
<dbReference type="SUPFAM" id="SSF53335">
    <property type="entry name" value="S-adenosyl-L-methionine-dependent methyltransferases"/>
    <property type="match status" value="1"/>
</dbReference>
<comment type="function">
    <text evidence="1">Specifically methylates the guanosine in position 1516 of 16S rRNA.</text>
</comment>
<comment type="catalytic activity">
    <reaction evidence="1">
        <text>guanosine(1516) in 16S rRNA + S-adenosyl-L-methionine = N(2)-methylguanosine(1516) in 16S rRNA + S-adenosyl-L-homocysteine + H(+)</text>
        <dbReference type="Rhea" id="RHEA:43220"/>
        <dbReference type="Rhea" id="RHEA-COMP:10412"/>
        <dbReference type="Rhea" id="RHEA-COMP:10413"/>
        <dbReference type="ChEBI" id="CHEBI:15378"/>
        <dbReference type="ChEBI" id="CHEBI:57856"/>
        <dbReference type="ChEBI" id="CHEBI:59789"/>
        <dbReference type="ChEBI" id="CHEBI:74269"/>
        <dbReference type="ChEBI" id="CHEBI:74481"/>
        <dbReference type="EC" id="2.1.1.242"/>
    </reaction>
</comment>
<comment type="subcellular location">
    <subcellularLocation>
        <location evidence="1">Cytoplasm</location>
    </subcellularLocation>
</comment>
<comment type="similarity">
    <text evidence="1">Belongs to the methyltransferase superfamily. RsmJ family.</text>
</comment>
<evidence type="ECO:0000255" key="1">
    <source>
        <dbReference type="HAMAP-Rule" id="MF_01523"/>
    </source>
</evidence>
<organism>
    <name type="scientific">Francisella philomiragia subsp. philomiragia (strain ATCC 25017 / CCUG 19701 / FSC 153 / O#319-036)</name>
    <dbReference type="NCBI Taxonomy" id="484022"/>
    <lineage>
        <taxon>Bacteria</taxon>
        <taxon>Pseudomonadati</taxon>
        <taxon>Pseudomonadota</taxon>
        <taxon>Gammaproteobacteria</taxon>
        <taxon>Thiotrichales</taxon>
        <taxon>Francisellaceae</taxon>
        <taxon>Francisella</taxon>
    </lineage>
</organism>
<name>RSMJ_FRAP2</name>
<sequence>MNVYDLAVISHIENITDIEFEYILSSQDDKYLYVDNNILKLHYKDKELFIDFNSSEILNRINPSTKKCSVVQAVEGRSKDKLNILDTTAGLGRDTFTLAARGHRLVSLEKDCYIFVLLADTLNRARQIPNLKDIANQIELINIDANEYINTASISFDCIYIDPMFPQRNKSAKVKQGMQVLHDIAFNDDESNSNLLKNIIISKKTKKAVVKRPINADFLYGKKPTSQLKGKTNRFDVYSL</sequence>
<feature type="chain" id="PRO_0000383379" description="Ribosomal RNA small subunit methyltransferase J">
    <location>
        <begin position="1"/>
        <end position="240"/>
    </location>
</feature>
<feature type="binding site" evidence="1">
    <location>
        <begin position="93"/>
        <end position="94"/>
    </location>
    <ligand>
        <name>S-adenosyl-L-methionine</name>
        <dbReference type="ChEBI" id="CHEBI:59789"/>
    </ligand>
</feature>
<feature type="binding site" evidence="1">
    <location>
        <position position="162"/>
    </location>
    <ligand>
        <name>S-adenosyl-L-methionine</name>
        <dbReference type="ChEBI" id="CHEBI:59789"/>
    </ligand>
</feature>
<keyword id="KW-0963">Cytoplasm</keyword>
<keyword id="KW-0489">Methyltransferase</keyword>
<keyword id="KW-0698">rRNA processing</keyword>
<keyword id="KW-0949">S-adenosyl-L-methionine</keyword>
<keyword id="KW-0808">Transferase</keyword>
<gene>
    <name evidence="1" type="primary">rsmJ</name>
    <name type="ordered locus">Fphi_1129</name>
</gene>